<sequence length="98" mass="10924">MSMVYFNIFMAFTVSFVGLLMYRSHLMSSLLCLEGMMLSLFVMMSMTILNNHFTLASMAPIILLVFAACEAALGLSLLVMVSNTYGTDYVQNLNLLQC</sequence>
<feature type="chain" id="PRO_0000274972" description="NADH-ubiquinone oxidoreductase chain 4L">
    <location>
        <begin position="1"/>
        <end position="98"/>
    </location>
</feature>
<feature type="transmembrane region" description="Helical" evidence="3">
    <location>
        <begin position="1"/>
        <end position="21"/>
    </location>
</feature>
<feature type="transmembrane region" description="Helical" evidence="3">
    <location>
        <begin position="29"/>
        <end position="49"/>
    </location>
</feature>
<feature type="transmembrane region" description="Helical" evidence="3">
    <location>
        <begin position="61"/>
        <end position="81"/>
    </location>
</feature>
<protein>
    <recommendedName>
        <fullName>NADH-ubiquinone oxidoreductase chain 4L</fullName>
        <ecNumber>7.1.1.2</ecNumber>
    </recommendedName>
    <alternativeName>
        <fullName>NADH dehydrogenase subunit 4L</fullName>
    </alternativeName>
</protein>
<organism>
    <name type="scientific">Arctocephalus forsteri</name>
    <name type="common">New Zealand fur seal</name>
    <name type="synonym">Arctocephalus australis forsteri</name>
    <dbReference type="NCBI Taxonomy" id="29084"/>
    <lineage>
        <taxon>Eukaryota</taxon>
        <taxon>Metazoa</taxon>
        <taxon>Chordata</taxon>
        <taxon>Craniata</taxon>
        <taxon>Vertebrata</taxon>
        <taxon>Euteleostomi</taxon>
        <taxon>Mammalia</taxon>
        <taxon>Eutheria</taxon>
        <taxon>Laurasiatheria</taxon>
        <taxon>Carnivora</taxon>
        <taxon>Caniformia</taxon>
        <taxon>Pinnipedia</taxon>
        <taxon>Otariidae</taxon>
        <taxon>Arctocephalus</taxon>
    </lineage>
</organism>
<reference key="1">
    <citation type="journal article" date="2002" name="Mol. Biol. Evol.">
        <title>Four new mitochondrial genomes and the increased stability of evolutionary trees of mammals from improved taxon sampling.</title>
        <authorList>
            <person name="Lin Y.-H."/>
            <person name="McLenachan P.A."/>
            <person name="Gore A.R."/>
            <person name="Phillips M.J."/>
            <person name="Ota R."/>
            <person name="Hendy M.D."/>
            <person name="Penny D."/>
        </authorList>
    </citation>
    <scope>NUCLEOTIDE SEQUENCE [GENOMIC DNA]</scope>
</reference>
<comment type="function">
    <text evidence="1">Core subunit of the mitochondrial membrane respiratory chain NADH dehydrogenase (Complex I) which catalyzes electron transfer from NADH through the respiratory chain, using ubiquinone as an electron acceptor. Part of the enzyme membrane arm which is embedded in the lipid bilayer and involved in proton translocation.</text>
</comment>
<comment type="catalytic activity">
    <reaction evidence="1">
        <text>a ubiquinone + NADH + 5 H(+)(in) = a ubiquinol + NAD(+) + 4 H(+)(out)</text>
        <dbReference type="Rhea" id="RHEA:29091"/>
        <dbReference type="Rhea" id="RHEA-COMP:9565"/>
        <dbReference type="Rhea" id="RHEA-COMP:9566"/>
        <dbReference type="ChEBI" id="CHEBI:15378"/>
        <dbReference type="ChEBI" id="CHEBI:16389"/>
        <dbReference type="ChEBI" id="CHEBI:17976"/>
        <dbReference type="ChEBI" id="CHEBI:57540"/>
        <dbReference type="ChEBI" id="CHEBI:57945"/>
        <dbReference type="EC" id="7.1.1.2"/>
    </reaction>
    <physiologicalReaction direction="left-to-right" evidence="1">
        <dbReference type="Rhea" id="RHEA:29092"/>
    </physiologicalReaction>
</comment>
<comment type="subunit">
    <text evidence="2">Core subunit of respiratory chain NADH dehydrogenase (Complex I) which is composed of 45 different subunits.</text>
</comment>
<comment type="subcellular location">
    <subcellularLocation>
        <location evidence="2">Mitochondrion inner membrane</location>
        <topology evidence="3">Multi-pass membrane protein</topology>
    </subcellularLocation>
</comment>
<comment type="similarity">
    <text evidence="4">Belongs to the complex I subunit 4L family.</text>
</comment>
<geneLocation type="mitochondrion"/>
<evidence type="ECO:0000250" key="1">
    <source>
        <dbReference type="UniProtKB" id="P03901"/>
    </source>
</evidence>
<evidence type="ECO:0000250" key="2">
    <source>
        <dbReference type="UniProtKB" id="P03902"/>
    </source>
</evidence>
<evidence type="ECO:0000255" key="3"/>
<evidence type="ECO:0000305" key="4"/>
<gene>
    <name type="primary">MT-ND4L</name>
    <name type="synonym">MTND4L</name>
    <name type="synonym">NADH4L</name>
    <name type="synonym">ND4L</name>
</gene>
<proteinExistence type="inferred from homology"/>
<name>NU4LM_ARCFO</name>
<dbReference type="EC" id="7.1.1.2"/>
<dbReference type="EMBL" id="AF513820">
    <property type="protein sequence ID" value="AAM51819.1"/>
    <property type="molecule type" value="Genomic_DNA"/>
</dbReference>
<dbReference type="RefSeq" id="NP_659244.1">
    <property type="nucleotide sequence ID" value="NC_004023.1"/>
</dbReference>
<dbReference type="SMR" id="Q8M154"/>
<dbReference type="GeneID" id="805007"/>
<dbReference type="CTD" id="4539"/>
<dbReference type="GO" id="GO:0005743">
    <property type="term" value="C:mitochondrial inner membrane"/>
    <property type="evidence" value="ECO:0000250"/>
    <property type="project" value="UniProtKB"/>
</dbReference>
<dbReference type="GO" id="GO:0045271">
    <property type="term" value="C:respiratory chain complex I"/>
    <property type="evidence" value="ECO:0000250"/>
    <property type="project" value="UniProtKB"/>
</dbReference>
<dbReference type="GO" id="GO:0008137">
    <property type="term" value="F:NADH dehydrogenase (ubiquinone) activity"/>
    <property type="evidence" value="ECO:0000250"/>
    <property type="project" value="UniProtKB"/>
</dbReference>
<dbReference type="GO" id="GO:0042773">
    <property type="term" value="P:ATP synthesis coupled electron transport"/>
    <property type="evidence" value="ECO:0007669"/>
    <property type="project" value="InterPro"/>
</dbReference>
<dbReference type="FunFam" id="1.10.287.3510:FF:000002">
    <property type="entry name" value="NADH-ubiquinone oxidoreductase chain 4L"/>
    <property type="match status" value="1"/>
</dbReference>
<dbReference type="Gene3D" id="1.10.287.3510">
    <property type="match status" value="1"/>
</dbReference>
<dbReference type="InterPro" id="IPR001133">
    <property type="entry name" value="NADH_UbQ_OxRdtase_chain4L/K"/>
</dbReference>
<dbReference type="InterPro" id="IPR039428">
    <property type="entry name" value="NUOK/Mnh_C1-like"/>
</dbReference>
<dbReference type="PANTHER" id="PTHR11434:SF0">
    <property type="entry name" value="NADH-UBIQUINONE OXIDOREDUCTASE CHAIN 4L"/>
    <property type="match status" value="1"/>
</dbReference>
<dbReference type="PANTHER" id="PTHR11434">
    <property type="entry name" value="NADH-UBIQUINONE OXIDOREDUCTASE SUBUNIT ND4L"/>
    <property type="match status" value="1"/>
</dbReference>
<dbReference type="Pfam" id="PF00420">
    <property type="entry name" value="Oxidored_q2"/>
    <property type="match status" value="1"/>
</dbReference>
<keyword id="KW-0249">Electron transport</keyword>
<keyword id="KW-0472">Membrane</keyword>
<keyword id="KW-0496">Mitochondrion</keyword>
<keyword id="KW-0999">Mitochondrion inner membrane</keyword>
<keyword id="KW-0520">NAD</keyword>
<keyword id="KW-0679">Respiratory chain</keyword>
<keyword id="KW-1278">Translocase</keyword>
<keyword id="KW-0812">Transmembrane</keyword>
<keyword id="KW-1133">Transmembrane helix</keyword>
<keyword id="KW-0813">Transport</keyword>
<keyword id="KW-0830">Ubiquinone</keyword>
<accession>Q8M154</accession>